<sequence>MRVGALDVGEARIGLAVGEEGVPLASGRGYLVRKTLEEDVEALLDFVRREGLGKLVVGLPLRTDLKESAQAGKVLPLVEALRARGVEVELWDERFTTKLAQERLKHAPKRLRRDKGKLDELAAVVLLEDYLARGI</sequence>
<keyword id="KW-0002">3D-structure</keyword>
<keyword id="KW-0963">Cytoplasm</keyword>
<keyword id="KW-0378">Hydrolase</keyword>
<keyword id="KW-0540">Nuclease</keyword>
<keyword id="KW-1185">Reference proteome</keyword>
<keyword id="KW-0690">Ribosome biogenesis</keyword>
<dbReference type="EC" id="3.1.-.-" evidence="1"/>
<dbReference type="EMBL" id="AP008226">
    <property type="protein sequence ID" value="BAD71652.1"/>
    <property type="molecule type" value="Genomic_DNA"/>
</dbReference>
<dbReference type="RefSeq" id="YP_145095.1">
    <property type="nucleotide sequence ID" value="NC_006461.1"/>
</dbReference>
<dbReference type="PDB" id="1IV0">
    <property type="method" value="NMR"/>
    <property type="chains" value="A=1-98"/>
</dbReference>
<dbReference type="PDBsum" id="1IV0"/>
<dbReference type="SMR" id="Q5SHA1"/>
<dbReference type="EnsemblBacteria" id="BAD71652">
    <property type="protein sequence ID" value="BAD71652"/>
    <property type="gene ID" value="BAD71652"/>
</dbReference>
<dbReference type="GeneID" id="3168171"/>
<dbReference type="KEGG" id="ttj:TTHA1829"/>
<dbReference type="PATRIC" id="fig|300852.9.peg.1800"/>
<dbReference type="eggNOG" id="COG0816">
    <property type="taxonomic scope" value="Bacteria"/>
</dbReference>
<dbReference type="HOGENOM" id="CLU_098240_2_2_0"/>
<dbReference type="PhylomeDB" id="Q5SHA1"/>
<dbReference type="EvolutionaryTrace" id="Q5SHA1"/>
<dbReference type="Proteomes" id="UP000000532">
    <property type="component" value="Chromosome"/>
</dbReference>
<dbReference type="GO" id="GO:0005829">
    <property type="term" value="C:cytosol"/>
    <property type="evidence" value="ECO:0007669"/>
    <property type="project" value="TreeGrafter"/>
</dbReference>
<dbReference type="GO" id="GO:0004518">
    <property type="term" value="F:nuclease activity"/>
    <property type="evidence" value="ECO:0007669"/>
    <property type="project" value="UniProtKB-KW"/>
</dbReference>
<dbReference type="GO" id="GO:0000967">
    <property type="term" value="P:rRNA 5'-end processing"/>
    <property type="evidence" value="ECO:0007669"/>
    <property type="project" value="UniProtKB-UniRule"/>
</dbReference>
<dbReference type="CDD" id="cd16964">
    <property type="entry name" value="YqgF"/>
    <property type="match status" value="1"/>
</dbReference>
<dbReference type="Gene3D" id="3.30.420.140">
    <property type="entry name" value="YqgF/RNase H-like domain"/>
    <property type="match status" value="1"/>
</dbReference>
<dbReference type="HAMAP" id="MF_00651">
    <property type="entry name" value="Nuclease_YqgF"/>
    <property type="match status" value="1"/>
</dbReference>
<dbReference type="InterPro" id="IPR012337">
    <property type="entry name" value="RNaseH-like_sf"/>
</dbReference>
<dbReference type="InterPro" id="IPR005227">
    <property type="entry name" value="YqgF"/>
</dbReference>
<dbReference type="InterPro" id="IPR006641">
    <property type="entry name" value="YqgF/RNaseH-like_dom"/>
</dbReference>
<dbReference type="InterPro" id="IPR037027">
    <property type="entry name" value="YqgF/RNaseH-like_dom_sf"/>
</dbReference>
<dbReference type="NCBIfam" id="TIGR00250">
    <property type="entry name" value="RNAse_H_YqgF"/>
    <property type="match status" value="1"/>
</dbReference>
<dbReference type="PANTHER" id="PTHR33317">
    <property type="entry name" value="POLYNUCLEOTIDYL TRANSFERASE, RIBONUCLEASE H-LIKE SUPERFAMILY PROTEIN"/>
    <property type="match status" value="1"/>
</dbReference>
<dbReference type="PANTHER" id="PTHR33317:SF4">
    <property type="entry name" value="POLYNUCLEOTIDYL TRANSFERASE, RIBONUCLEASE H-LIKE SUPERFAMILY PROTEIN"/>
    <property type="match status" value="1"/>
</dbReference>
<dbReference type="Pfam" id="PF03652">
    <property type="entry name" value="RuvX"/>
    <property type="match status" value="1"/>
</dbReference>
<dbReference type="SMART" id="SM00732">
    <property type="entry name" value="YqgFc"/>
    <property type="match status" value="1"/>
</dbReference>
<dbReference type="SUPFAM" id="SSF53098">
    <property type="entry name" value="Ribonuclease H-like"/>
    <property type="match status" value="1"/>
</dbReference>
<feature type="chain" id="PRO_0000172164" description="Putative pre-16S rRNA nuclease">
    <location>
        <begin position="1"/>
        <end position="135"/>
    </location>
</feature>
<feature type="strand" evidence="2">
    <location>
        <begin position="3"/>
        <end position="18"/>
    </location>
</feature>
<feature type="strand" evidence="2">
    <location>
        <begin position="28"/>
        <end position="32"/>
    </location>
</feature>
<feature type="helix" evidence="2">
    <location>
        <begin position="36"/>
        <end position="49"/>
    </location>
</feature>
<feature type="strand" evidence="2">
    <location>
        <begin position="54"/>
        <end position="58"/>
    </location>
</feature>
<feature type="strand" evidence="2">
    <location>
        <begin position="65"/>
        <end position="67"/>
    </location>
</feature>
<feature type="helix" evidence="2">
    <location>
        <begin position="75"/>
        <end position="83"/>
    </location>
</feature>
<feature type="strand" evidence="2">
    <location>
        <begin position="87"/>
        <end position="91"/>
    </location>
</feature>
<gene>
    <name type="ordered locus">TTHA1829</name>
</gene>
<protein>
    <recommendedName>
        <fullName evidence="1">Putative pre-16S rRNA nuclease</fullName>
        <ecNumber evidence="1">3.1.-.-</ecNumber>
    </recommendedName>
</protein>
<accession>Q5SHA1</accession>
<accession>P83694</accession>
<comment type="function">
    <text evidence="1">Could be a nuclease involved in processing of the 5'-end of pre-16S rRNA.</text>
</comment>
<comment type="subcellular location">
    <subcellularLocation>
        <location evidence="1">Cytoplasm</location>
    </subcellularLocation>
</comment>
<comment type="similarity">
    <text evidence="1">Belongs to the YqgF nuclease family.</text>
</comment>
<proteinExistence type="evidence at protein level"/>
<evidence type="ECO:0000255" key="1">
    <source>
        <dbReference type="HAMAP-Rule" id="MF_00651"/>
    </source>
</evidence>
<evidence type="ECO:0007829" key="2">
    <source>
        <dbReference type="PDB" id="1IV0"/>
    </source>
</evidence>
<name>YQGF_THET8</name>
<reference key="1">
    <citation type="submission" date="2004-11" db="EMBL/GenBank/DDBJ databases">
        <title>Complete genome sequence of Thermus thermophilus HB8.</title>
        <authorList>
            <person name="Masui R."/>
            <person name="Kurokawa K."/>
            <person name="Nakagawa N."/>
            <person name="Tokunaga F."/>
            <person name="Koyama Y."/>
            <person name="Shibata T."/>
            <person name="Oshima T."/>
            <person name="Yokoyama S."/>
            <person name="Yasunaga T."/>
            <person name="Kuramitsu S."/>
        </authorList>
    </citation>
    <scope>NUCLEOTIDE SEQUENCE [LARGE SCALE GENOMIC DNA]</scope>
    <source>
        <strain>ATCC 27634 / DSM 579 / HB8</strain>
    </source>
</reference>
<reference key="2">
    <citation type="submission" date="2003-10" db="PDB data bank">
        <title>Solution structure of the YqgF-family protein (N-terminal fragment).</title>
        <authorList>
            <consortium name="RIKEN structural genomics initiative (RSGI)"/>
        </authorList>
    </citation>
    <scope>STRUCTURE BY NMR OF 1-98</scope>
</reference>
<organism>
    <name type="scientific">Thermus thermophilus (strain ATCC 27634 / DSM 579 / HB8)</name>
    <dbReference type="NCBI Taxonomy" id="300852"/>
    <lineage>
        <taxon>Bacteria</taxon>
        <taxon>Thermotogati</taxon>
        <taxon>Deinococcota</taxon>
        <taxon>Deinococci</taxon>
        <taxon>Thermales</taxon>
        <taxon>Thermaceae</taxon>
        <taxon>Thermus</taxon>
    </lineage>
</organism>